<gene>
    <name type="primary">FCRLA</name>
    <name type="synonym">FCRL</name>
    <name type="synonym">FCRL1</name>
    <name type="synonym">FCRLM1</name>
    <name type="synonym">FCRX</name>
    <name type="synonym">FREB</name>
    <name type="ORF">UNQ291/PRO329</name>
</gene>
<reference key="1">
    <citation type="journal article" date="2002" name="Eur. J. Immunol.">
        <title>FCRL, a novel member of the leukocyte Fc receptor family possesses unique structural features.</title>
        <authorList>
            <person name="Mechetina L.V."/>
            <person name="Najakshin A.M."/>
            <person name="Volkova O.Y."/>
            <person name="Guselnikov S.V."/>
            <person name="Faizulin R.Z."/>
            <person name="Alabyev B.Y."/>
            <person name="Chikaev N.A."/>
            <person name="Vinogradova M.S."/>
            <person name="Taranin A.V."/>
        </authorList>
    </citation>
    <scope>NUCLEOTIDE SEQUENCE [MRNA] (ISOFORMS 1; 3; 4; 5; 6 AND 7)</scope>
    <scope>FUNCTION</scope>
    <scope>SUBCELLULAR LOCATION</scope>
    <scope>TISSUE SPECIFICITY</scope>
    <scope>VARIANT GLN-349</scope>
    <source>
        <tissue>Lymph</tissue>
        <tissue>Melanocyte</tissue>
        <tissue>Tonsil</tissue>
    </source>
</reference>
<reference key="2">
    <citation type="journal article" date="2002" name="Proc. Natl. Acad. Sci. U.S.A.">
        <title>An unusual Fc receptor-related protein expressed in human centroblasts.</title>
        <authorList>
            <person name="Facchetti F."/>
            <person name="Cella M."/>
            <person name="Festa S."/>
            <person name="Fremont D.H."/>
            <person name="Colonna M."/>
        </authorList>
    </citation>
    <scope>NUCLEOTIDE SEQUENCE [MRNA] (ISOFORMS 1 AND 9)</scope>
    <scope>FUNCTION</scope>
    <scope>SUBCELLULAR LOCATION</scope>
    <scope>TISSUE SPECIFICITY</scope>
    <scope>VARIANT GLN-349</scope>
</reference>
<reference key="3">
    <citation type="journal article" date="2002" name="Int. Immunol.">
        <title>Definition of an Fc receptor-related gene (FcRX) expressed in human and mouse B cells.</title>
        <authorList>
            <person name="Davis R.S."/>
            <person name="Li H."/>
            <person name="Chen C.-C."/>
            <person name="Wang Y.-H."/>
            <person name="Cooper M.D."/>
            <person name="Burrows P.D."/>
        </authorList>
    </citation>
    <scope>NUCLEOTIDE SEQUENCE [MRNA] (ISOFORMS 1 AND 9)</scope>
    <scope>TISSUE SPECIFICITY</scope>
    <scope>VARIANT GLN-349</scope>
</reference>
<reference key="4">
    <citation type="journal article" date="2005" name="Int. J. Cancer">
        <title>Novel melanoma antigen, FCRL/FREB, identified by cDNA profile comparison using DNA chip are immunogenic in multiple melanoma patients.</title>
        <authorList>
            <person name="Inozume T."/>
            <person name="Matsuzaki Y."/>
            <person name="Kurihara S."/>
            <person name="Fujita T."/>
            <person name="Yamamoto A."/>
            <person name="Aburatani H."/>
            <person name="Shimada S."/>
            <person name="Kawakami Y."/>
        </authorList>
    </citation>
    <scope>NUCLEOTIDE SEQUENCE [MRNA] (ISOFORMS 1; 3; 5; 6; 7 AND 8)</scope>
    <scope>TISSUE SPECIFICITY</scope>
    <scope>SUBCELLULAR LOCATION</scope>
    <source>
        <tissue>Melanocyte</tissue>
    </source>
</reference>
<reference key="5">
    <citation type="submission" date="2002-05" db="EMBL/GenBank/DDBJ databases">
        <authorList>
            <person name="Guselnikov S."/>
            <person name="Najakshin A.M."/>
        </authorList>
    </citation>
    <scope>NUCLEOTIDE SEQUENCE [MRNA] (ISOFORM 2)</scope>
    <scope>VARIANT GLN-349</scope>
    <source>
        <tissue>Tonsil</tissue>
    </source>
</reference>
<reference key="6">
    <citation type="submission" date="2006-10" db="EMBL/GenBank/DDBJ databases">
        <authorList>
            <person name="Livingston R.J."/>
            <person name="Shaffer T."/>
            <person name="McFarland I."/>
            <person name="Nguyen C.P."/>
            <person name="Stanaway I.B."/>
            <person name="Rajkumar N."/>
            <person name="Johnson E.J."/>
            <person name="da Ponte S.H."/>
            <person name="Willa H."/>
            <person name="Ahearn M.O."/>
            <person name="Bertucci C."/>
            <person name="Acklestad J."/>
            <person name="Carroll A."/>
            <person name="Swanson J."/>
            <person name="Gildersleeve H.I."/>
            <person name="Nickerson D.A."/>
        </authorList>
    </citation>
    <scope>NUCLEOTIDE SEQUENCE [GENOMIC DNA]</scope>
</reference>
<reference key="7">
    <citation type="journal article" date="2003" name="Genome Res.">
        <title>The secreted protein discovery initiative (SPDI), a large-scale effort to identify novel human secreted and transmembrane proteins: a bioinformatics assessment.</title>
        <authorList>
            <person name="Clark H.F."/>
            <person name="Gurney A.L."/>
            <person name="Abaya E."/>
            <person name="Baker K."/>
            <person name="Baldwin D.T."/>
            <person name="Brush J."/>
            <person name="Chen J."/>
            <person name="Chow B."/>
            <person name="Chui C."/>
            <person name="Crowley C."/>
            <person name="Currell B."/>
            <person name="Deuel B."/>
            <person name="Dowd P."/>
            <person name="Eaton D."/>
            <person name="Foster J.S."/>
            <person name="Grimaldi C."/>
            <person name="Gu Q."/>
            <person name="Hass P.E."/>
            <person name="Heldens S."/>
            <person name="Huang A."/>
            <person name="Kim H.S."/>
            <person name="Klimowski L."/>
            <person name="Jin Y."/>
            <person name="Johnson S."/>
            <person name="Lee J."/>
            <person name="Lewis L."/>
            <person name="Liao D."/>
            <person name="Mark M.R."/>
            <person name="Robbie E."/>
            <person name="Sanchez C."/>
            <person name="Schoenfeld J."/>
            <person name="Seshagiri S."/>
            <person name="Simmons L."/>
            <person name="Singh J."/>
            <person name="Smith V."/>
            <person name="Stinson J."/>
            <person name="Vagts A."/>
            <person name="Vandlen R.L."/>
            <person name="Watanabe C."/>
            <person name="Wieand D."/>
            <person name="Woods K."/>
            <person name="Xie M.-H."/>
            <person name="Yansura D.G."/>
            <person name="Yi S."/>
            <person name="Yu G."/>
            <person name="Yuan J."/>
            <person name="Zhang M."/>
            <person name="Zhang Z."/>
            <person name="Goddard A.D."/>
            <person name="Wood W.I."/>
            <person name="Godowski P.J."/>
            <person name="Gray A.M."/>
        </authorList>
    </citation>
    <scope>NUCLEOTIDE SEQUENCE [LARGE SCALE MRNA] (ISOFORMS 1 AND 9)</scope>
    <scope>VARIANT GLN-349</scope>
    <source>
        <tissue>Lymph</tissue>
        <tissue>Tonsil</tissue>
    </source>
</reference>
<reference key="8">
    <citation type="journal article" date="2006" name="Nature">
        <title>The DNA sequence and biological annotation of human chromosome 1.</title>
        <authorList>
            <person name="Gregory S.G."/>
            <person name="Barlow K.F."/>
            <person name="McLay K.E."/>
            <person name="Kaul R."/>
            <person name="Swarbreck D."/>
            <person name="Dunham A."/>
            <person name="Scott C.E."/>
            <person name="Howe K.L."/>
            <person name="Woodfine K."/>
            <person name="Spencer C.C.A."/>
            <person name="Jones M.C."/>
            <person name="Gillson C."/>
            <person name="Searle S."/>
            <person name="Zhou Y."/>
            <person name="Kokocinski F."/>
            <person name="McDonald L."/>
            <person name="Evans R."/>
            <person name="Phillips K."/>
            <person name="Atkinson A."/>
            <person name="Cooper R."/>
            <person name="Jones C."/>
            <person name="Hall R.E."/>
            <person name="Andrews T.D."/>
            <person name="Lloyd C."/>
            <person name="Ainscough R."/>
            <person name="Almeida J.P."/>
            <person name="Ambrose K.D."/>
            <person name="Anderson F."/>
            <person name="Andrew R.W."/>
            <person name="Ashwell R.I.S."/>
            <person name="Aubin K."/>
            <person name="Babbage A.K."/>
            <person name="Bagguley C.L."/>
            <person name="Bailey J."/>
            <person name="Beasley H."/>
            <person name="Bethel G."/>
            <person name="Bird C.P."/>
            <person name="Bray-Allen S."/>
            <person name="Brown J.Y."/>
            <person name="Brown A.J."/>
            <person name="Buckley D."/>
            <person name="Burton J."/>
            <person name="Bye J."/>
            <person name="Carder C."/>
            <person name="Chapman J.C."/>
            <person name="Clark S.Y."/>
            <person name="Clarke G."/>
            <person name="Clee C."/>
            <person name="Cobley V."/>
            <person name="Collier R.E."/>
            <person name="Corby N."/>
            <person name="Coville G.J."/>
            <person name="Davies J."/>
            <person name="Deadman R."/>
            <person name="Dunn M."/>
            <person name="Earthrowl M."/>
            <person name="Ellington A.G."/>
            <person name="Errington H."/>
            <person name="Frankish A."/>
            <person name="Frankland J."/>
            <person name="French L."/>
            <person name="Garner P."/>
            <person name="Garnett J."/>
            <person name="Gay L."/>
            <person name="Ghori M.R.J."/>
            <person name="Gibson R."/>
            <person name="Gilby L.M."/>
            <person name="Gillett W."/>
            <person name="Glithero R.J."/>
            <person name="Grafham D.V."/>
            <person name="Griffiths C."/>
            <person name="Griffiths-Jones S."/>
            <person name="Grocock R."/>
            <person name="Hammond S."/>
            <person name="Harrison E.S.I."/>
            <person name="Hart E."/>
            <person name="Haugen E."/>
            <person name="Heath P.D."/>
            <person name="Holmes S."/>
            <person name="Holt K."/>
            <person name="Howden P.J."/>
            <person name="Hunt A.R."/>
            <person name="Hunt S.E."/>
            <person name="Hunter G."/>
            <person name="Isherwood J."/>
            <person name="James R."/>
            <person name="Johnson C."/>
            <person name="Johnson D."/>
            <person name="Joy A."/>
            <person name="Kay M."/>
            <person name="Kershaw J.K."/>
            <person name="Kibukawa M."/>
            <person name="Kimberley A.M."/>
            <person name="King A."/>
            <person name="Knights A.J."/>
            <person name="Lad H."/>
            <person name="Laird G."/>
            <person name="Lawlor S."/>
            <person name="Leongamornlert D.A."/>
            <person name="Lloyd D.M."/>
            <person name="Loveland J."/>
            <person name="Lovell J."/>
            <person name="Lush M.J."/>
            <person name="Lyne R."/>
            <person name="Martin S."/>
            <person name="Mashreghi-Mohammadi M."/>
            <person name="Matthews L."/>
            <person name="Matthews N.S.W."/>
            <person name="McLaren S."/>
            <person name="Milne S."/>
            <person name="Mistry S."/>
            <person name="Moore M.J.F."/>
            <person name="Nickerson T."/>
            <person name="O'Dell C.N."/>
            <person name="Oliver K."/>
            <person name="Palmeiri A."/>
            <person name="Palmer S.A."/>
            <person name="Parker A."/>
            <person name="Patel D."/>
            <person name="Pearce A.V."/>
            <person name="Peck A.I."/>
            <person name="Pelan S."/>
            <person name="Phelps K."/>
            <person name="Phillimore B.J."/>
            <person name="Plumb R."/>
            <person name="Rajan J."/>
            <person name="Raymond C."/>
            <person name="Rouse G."/>
            <person name="Saenphimmachak C."/>
            <person name="Sehra H.K."/>
            <person name="Sheridan E."/>
            <person name="Shownkeen R."/>
            <person name="Sims S."/>
            <person name="Skuce C.D."/>
            <person name="Smith M."/>
            <person name="Steward C."/>
            <person name="Subramanian S."/>
            <person name="Sycamore N."/>
            <person name="Tracey A."/>
            <person name="Tromans A."/>
            <person name="Van Helmond Z."/>
            <person name="Wall M."/>
            <person name="Wallis J.M."/>
            <person name="White S."/>
            <person name="Whitehead S.L."/>
            <person name="Wilkinson J.E."/>
            <person name="Willey D.L."/>
            <person name="Williams H."/>
            <person name="Wilming L."/>
            <person name="Wray P.W."/>
            <person name="Wu Z."/>
            <person name="Coulson A."/>
            <person name="Vaudin M."/>
            <person name="Sulston J.E."/>
            <person name="Durbin R.M."/>
            <person name="Hubbard T."/>
            <person name="Wooster R."/>
            <person name="Dunham I."/>
            <person name="Carter N.P."/>
            <person name="McVean G."/>
            <person name="Ross M.T."/>
            <person name="Harrow J."/>
            <person name="Olson M.V."/>
            <person name="Beck S."/>
            <person name="Rogers J."/>
            <person name="Bentley D.R."/>
        </authorList>
    </citation>
    <scope>NUCLEOTIDE SEQUENCE [LARGE SCALE GENOMIC DNA]</scope>
</reference>
<reference key="9">
    <citation type="submission" date="2005-07" db="EMBL/GenBank/DDBJ databases">
        <authorList>
            <person name="Mural R.J."/>
            <person name="Istrail S."/>
            <person name="Sutton G.G."/>
            <person name="Florea L."/>
            <person name="Halpern A.L."/>
            <person name="Mobarry C.M."/>
            <person name="Lippert R."/>
            <person name="Walenz B."/>
            <person name="Shatkay H."/>
            <person name="Dew I."/>
            <person name="Miller J.R."/>
            <person name="Flanigan M.J."/>
            <person name="Edwards N.J."/>
            <person name="Bolanos R."/>
            <person name="Fasulo D."/>
            <person name="Halldorsson B.V."/>
            <person name="Hannenhalli S."/>
            <person name="Turner R."/>
            <person name="Yooseph S."/>
            <person name="Lu F."/>
            <person name="Nusskern D.R."/>
            <person name="Shue B.C."/>
            <person name="Zheng X.H."/>
            <person name="Zhong F."/>
            <person name="Delcher A.L."/>
            <person name="Huson D.H."/>
            <person name="Kravitz S.A."/>
            <person name="Mouchard L."/>
            <person name="Reinert K."/>
            <person name="Remington K.A."/>
            <person name="Clark A.G."/>
            <person name="Waterman M.S."/>
            <person name="Eichler E.E."/>
            <person name="Adams M.D."/>
            <person name="Hunkapiller M.W."/>
            <person name="Myers E.W."/>
            <person name="Venter J.C."/>
        </authorList>
    </citation>
    <scope>NUCLEOTIDE SEQUENCE [LARGE SCALE GENOMIC DNA]</scope>
</reference>
<reference key="10">
    <citation type="journal article" date="2004" name="Genome Res.">
        <title>The status, quality, and expansion of the NIH full-length cDNA project: the Mammalian Gene Collection (MGC).</title>
        <authorList>
            <consortium name="The MGC Project Team"/>
        </authorList>
    </citation>
    <scope>NUCLEOTIDE SEQUENCE [LARGE SCALE MRNA] (ISOFORM 1)</scope>
    <scope>VARIANT GLN-349</scope>
    <source>
        <tissue>Skin</tissue>
    </source>
</reference>
<reference key="11">
    <citation type="journal article" date="2004" name="Protein Sci.">
        <title>Signal peptide prediction based on analysis of experimentally verified cleavage sites.</title>
        <authorList>
            <person name="Zhang Z."/>
            <person name="Henzel W.J."/>
        </authorList>
    </citation>
    <scope>PROTEIN SEQUENCE OF 28-42</scope>
</reference>
<reference key="12">
    <citation type="submission" date="2005-06" db="UniProtKB">
        <authorList>
            <person name="Bienvenut W.V."/>
        </authorList>
    </citation>
    <scope>PROTEIN SEQUENCE OF 88-98; 252-259 AND 333-353</scope>
    <scope>IDENTIFICATION BY MASS SPECTROMETRY</scope>
    <source>
        <tissue>B-cell lymphoma</tissue>
    </source>
</reference>
<reference key="13">
    <citation type="journal article" date="2011" name="BMC Syst. Biol.">
        <title>Initial characterization of the human central proteome.</title>
        <authorList>
            <person name="Burkard T.R."/>
            <person name="Planyavsky M."/>
            <person name="Kaupe I."/>
            <person name="Breitwieser F.P."/>
            <person name="Buerckstuemmer T."/>
            <person name="Bennett K.L."/>
            <person name="Superti-Furga G."/>
            <person name="Colinge J."/>
        </authorList>
    </citation>
    <scope>IDENTIFICATION BY MASS SPECTROMETRY [LARGE SCALE ANALYSIS]</scope>
</reference>
<comment type="function">
    <text evidence="3 4">May be implicated in B-cell differentiation and lymphomagenesis.</text>
</comment>
<comment type="subunit">
    <text>Monomer or homodimer; disulfide-linked.</text>
</comment>
<comment type="subcellular location">
    <subcellularLocation>
        <location evidence="3 4 9">Cytoplasm</location>
    </subcellularLocation>
    <text evidence="4">Seems not to be secreted.</text>
</comment>
<comment type="alternative products">
    <event type="alternative splicing"/>
    <isoform>
        <id>Q7L513-1</id>
        <name>1</name>
        <name>FCRLa</name>
        <sequence type="displayed"/>
    </isoform>
    <isoform>
        <id>Q7L513-2</id>
        <name>2</name>
        <name>FCRLa1</name>
        <sequence type="described" ref="VSP_017605"/>
    </isoform>
    <isoform>
        <id>Q7L513-3</id>
        <name>3</name>
        <name>FCRLb</name>
        <sequence type="described" ref="VSP_017608"/>
    </isoform>
    <isoform>
        <id>Q7L513-4</id>
        <name>4</name>
        <name>FCRLc1</name>
        <sequence type="described" ref="VSP_017606"/>
    </isoform>
    <isoform>
        <id>Q7L513-5</id>
        <name>5</name>
        <name>FCRLc2</name>
        <sequence type="described" ref="VSP_017604"/>
    </isoform>
    <isoform>
        <id>Q7L513-6</id>
        <name>6</name>
        <name>FCRLd</name>
        <sequence type="described" ref="VSP_017607"/>
    </isoform>
    <isoform>
        <id>Q7L513-7</id>
        <name>7</name>
        <name>FCRLe</name>
        <sequence type="described" ref="VSP_017603"/>
    </isoform>
    <isoform>
        <id>Q7L513-8</id>
        <name>8</name>
        <name>FCRLf</name>
        <sequence type="described" ref="VSP_017609"/>
    </isoform>
    <isoform>
        <id>Q7L513-9</id>
        <name>9</name>
        <sequence type="described" ref="VSP_038297"/>
    </isoform>
    <isoform>
        <id>Q7L513-10</id>
        <name>10</name>
        <sequence type="described" ref="VSP_038297 VSP_017605"/>
    </isoform>
    <isoform>
        <id>Q7L513-11</id>
        <name>11</name>
        <sequence type="described" ref="VSP_038297 VSP_017606"/>
    </isoform>
    <isoform>
        <id>Q7L513-12</id>
        <name>12</name>
        <sequence type="described" ref="VSP_038297 VSP_017608"/>
    </isoform>
    <isoform>
        <id>Q7L513-13</id>
        <name>13</name>
        <sequence type="described" ref="VSP_038297 VSP_017607"/>
    </isoform>
    <isoform>
        <id>Q7L513-14</id>
        <name>14</name>
        <sequence type="described" ref="VSP_038297 VSP_017604"/>
    </isoform>
    <isoform>
        <id>Q7L513-15</id>
        <name>15</name>
        <sequence type="described" ref="VSP_038297 VSP_017603"/>
    </isoform>
</comment>
<comment type="tissue specificity">
    <text evidence="3 4 5 9">Expressed specifically in primary and secondary lymphoid tissues like lymph node, spleen and tonsil. Specifically expressed in B-cells with a high level in normal germinal center B-cells, centroblasts and in a subset of diffuse large B-cell lymphomas. Highly expressed in bone marrow B-cells and weakly in earlier B lineage cells. Expressed in pre-germinal and germinal center B-cells in secondary lymphoid tissues. Also expressed in melanoma and melanocytes.</text>
</comment>
<comment type="caution">
    <text evidence="17">It is uncertain whether Met-1 or Met-8 is the initiator.</text>
</comment>
<dbReference type="EMBL" id="AF329489">
    <property type="protein sequence ID" value="AAL23899.1"/>
    <property type="molecule type" value="mRNA"/>
</dbReference>
<dbReference type="EMBL" id="AF329491">
    <property type="protein sequence ID" value="AAL23901.1"/>
    <property type="molecule type" value="mRNA"/>
</dbReference>
<dbReference type="EMBL" id="AF329493">
    <property type="protein sequence ID" value="AAL23903.1"/>
    <property type="molecule type" value="mRNA"/>
</dbReference>
<dbReference type="EMBL" id="AF329494">
    <property type="protein sequence ID" value="AAL23904.1"/>
    <property type="molecule type" value="mRNA"/>
</dbReference>
<dbReference type="EMBL" id="AF329495">
    <property type="protein sequence ID" value="AAL23905.1"/>
    <property type="molecule type" value="mRNA"/>
</dbReference>
<dbReference type="EMBL" id="AF390036">
    <property type="protein sequence ID" value="AAL27307.1"/>
    <property type="molecule type" value="mRNA"/>
</dbReference>
<dbReference type="EMBL" id="AF426461">
    <property type="protein sequence ID" value="AAL58111.1"/>
    <property type="molecule type" value="mRNA"/>
</dbReference>
<dbReference type="EMBL" id="AF531423">
    <property type="protein sequence ID" value="AAM97591.1"/>
    <property type="molecule type" value="mRNA"/>
</dbReference>
<dbReference type="EMBL" id="AY091642">
    <property type="protein sequence ID" value="AAM13980.2"/>
    <property type="molecule type" value="mRNA"/>
</dbReference>
<dbReference type="EMBL" id="EF064729">
    <property type="protein sequence ID" value="ABK41912.1"/>
    <property type="molecule type" value="Genomic_DNA"/>
</dbReference>
<dbReference type="EMBL" id="AY358348">
    <property type="protein sequence ID" value="AAQ88714.1"/>
    <property type="molecule type" value="mRNA"/>
</dbReference>
<dbReference type="EMBL" id="AL359541">
    <property type="status" value="NOT_ANNOTATED_CDS"/>
    <property type="molecule type" value="Genomic_DNA"/>
</dbReference>
<dbReference type="EMBL" id="CH471067">
    <property type="protein sequence ID" value="EAW90683.1"/>
    <property type="molecule type" value="Genomic_DNA"/>
</dbReference>
<dbReference type="EMBL" id="CH471067">
    <property type="protein sequence ID" value="EAW90684.1"/>
    <property type="molecule type" value="Genomic_DNA"/>
</dbReference>
<dbReference type="EMBL" id="CH471067">
    <property type="protein sequence ID" value="EAW90685.1"/>
    <property type="molecule type" value="Genomic_DNA"/>
</dbReference>
<dbReference type="EMBL" id="BC006521">
    <property type="protein sequence ID" value="AAH06521.2"/>
    <property type="molecule type" value="mRNA"/>
</dbReference>
<dbReference type="CCDS" id="CCDS30926.2">
    <molecule id="Q7L513-1"/>
</dbReference>
<dbReference type="CCDS" id="CCDS53415.2">
    <molecule id="Q7L513-2"/>
</dbReference>
<dbReference type="CCDS" id="CCDS53416.2">
    <molecule id="Q7L513-4"/>
</dbReference>
<dbReference type="CCDS" id="CCDS53417.2">
    <molecule id="Q7L513-3"/>
</dbReference>
<dbReference type="CCDS" id="CCDS53418.1">
    <molecule id="Q7L513-6"/>
</dbReference>
<dbReference type="CCDS" id="CCDS53419.2">
    <molecule id="Q7L513-5"/>
</dbReference>
<dbReference type="CCDS" id="CCDS53420.1">
    <molecule id="Q7L513-7"/>
</dbReference>
<dbReference type="CCDS" id="CCDS91091.1">
    <molecule id="Q7L513-8"/>
</dbReference>
<dbReference type="RefSeq" id="NP_001171795.2">
    <molecule id="Q7L513-2"/>
    <property type="nucleotide sequence ID" value="NM_001184866.2"/>
</dbReference>
<dbReference type="RefSeq" id="NP_001171796.2">
    <molecule id="Q7L513-3"/>
    <property type="nucleotide sequence ID" value="NM_001184867.2"/>
</dbReference>
<dbReference type="RefSeq" id="NP_001171799.2">
    <molecule id="Q7L513-4"/>
    <property type="nucleotide sequence ID" value="NM_001184870.2"/>
</dbReference>
<dbReference type="RefSeq" id="NP_001171800.2">
    <molecule id="Q7L513-7"/>
    <property type="nucleotide sequence ID" value="NM_001184871.2"/>
</dbReference>
<dbReference type="RefSeq" id="NP_001171801.2">
    <molecule id="Q7L513-5"/>
    <property type="nucleotide sequence ID" value="NM_001184872.2"/>
</dbReference>
<dbReference type="RefSeq" id="NP_001171802.2">
    <molecule id="Q7L513-6"/>
    <property type="nucleotide sequence ID" value="NM_001184873.2"/>
</dbReference>
<dbReference type="RefSeq" id="NP_001353125.2">
    <molecule id="Q7L513-8"/>
    <property type="nucleotide sequence ID" value="NM_001366196.2"/>
</dbReference>
<dbReference type="RefSeq" id="NP_116127.3">
    <molecule id="Q7L513-1"/>
    <property type="nucleotide sequence ID" value="NM_032738.3"/>
</dbReference>
<dbReference type="PDB" id="4HWN">
    <property type="method" value="X-ray"/>
    <property type="resolution" value="2.01 A"/>
    <property type="chains" value="A=169-264"/>
</dbReference>
<dbReference type="PDBsum" id="4HWN"/>
<dbReference type="SMR" id="Q7L513"/>
<dbReference type="BioGRID" id="124282">
    <property type="interactions" value="2"/>
</dbReference>
<dbReference type="FunCoup" id="Q7L513">
    <property type="interactions" value="352"/>
</dbReference>
<dbReference type="IntAct" id="Q7L513">
    <property type="interactions" value="5"/>
</dbReference>
<dbReference type="STRING" id="9606.ENSP00000356936"/>
<dbReference type="GlyGen" id="Q7L513">
    <property type="glycosylation" value="2 sites, 1 O-linked glycan (1 site)"/>
</dbReference>
<dbReference type="iPTMnet" id="Q7L513"/>
<dbReference type="PhosphoSitePlus" id="Q7L513"/>
<dbReference type="BioMuta" id="FCRLA"/>
<dbReference type="DMDM" id="90101291"/>
<dbReference type="MassIVE" id="Q7L513"/>
<dbReference type="PaxDb" id="9606-ENSP00000356936"/>
<dbReference type="PeptideAtlas" id="Q7L513"/>
<dbReference type="ProteomicsDB" id="1444"/>
<dbReference type="ProteomicsDB" id="27358"/>
<dbReference type="ProteomicsDB" id="29885"/>
<dbReference type="ProteomicsDB" id="32350"/>
<dbReference type="ProteomicsDB" id="65585"/>
<dbReference type="ProteomicsDB" id="68782">
    <molecule id="Q7L513-1"/>
</dbReference>
<dbReference type="ProteomicsDB" id="68783">
    <molecule id="Q7L513-2"/>
</dbReference>
<dbReference type="ProteomicsDB" id="68784">
    <molecule id="Q7L513-3"/>
</dbReference>
<dbReference type="ProteomicsDB" id="68785">
    <molecule id="Q7L513-4"/>
</dbReference>
<dbReference type="ProteomicsDB" id="68786">
    <molecule id="Q7L513-5"/>
</dbReference>
<dbReference type="ProteomicsDB" id="68787">
    <molecule id="Q7L513-6"/>
</dbReference>
<dbReference type="ProteomicsDB" id="68788">
    <molecule id="Q7L513-7"/>
</dbReference>
<dbReference type="ProteomicsDB" id="68789">
    <molecule id="Q7L513-8"/>
</dbReference>
<dbReference type="ProteomicsDB" id="68790">
    <molecule id="Q7L513-9"/>
</dbReference>
<dbReference type="ProteomicsDB" id="793"/>
<dbReference type="Antibodypedia" id="34314">
    <property type="antibodies" value="108 antibodies from 21 providers"/>
</dbReference>
<dbReference type="DNASU" id="84824"/>
<dbReference type="Ensembl" id="ENST00000236938.12">
    <molecule id="Q7L513-1"/>
    <property type="protein sequence ID" value="ENSP00000236938.7"/>
    <property type="gene ID" value="ENSG00000132185.18"/>
</dbReference>
<dbReference type="Ensembl" id="ENST00000294796.8">
    <molecule id="Q7L513-4"/>
    <property type="protein sequence ID" value="ENSP00000294796.4"/>
    <property type="gene ID" value="ENSG00000132185.18"/>
</dbReference>
<dbReference type="Ensembl" id="ENST00000309691.10">
    <molecule id="Q7L513-3"/>
    <property type="protein sequence ID" value="ENSP00000309596.6"/>
    <property type="gene ID" value="ENSG00000132185.18"/>
</dbReference>
<dbReference type="Ensembl" id="ENST00000349527.8">
    <molecule id="Q7L513-8"/>
    <property type="protein sequence ID" value="ENSP00000294798.7"/>
    <property type="gene ID" value="ENSG00000132185.18"/>
</dbReference>
<dbReference type="Ensembl" id="ENST00000350710.3">
    <molecule id="Q7L513-15"/>
    <property type="protein sequence ID" value="ENSP00000344808.3"/>
    <property type="gene ID" value="ENSG00000132185.18"/>
</dbReference>
<dbReference type="Ensembl" id="ENST00000367949.6">
    <molecule id="Q7L513-13"/>
    <property type="protein sequence ID" value="ENSP00000356926.2"/>
    <property type="gene ID" value="ENSG00000132185.18"/>
</dbReference>
<dbReference type="Ensembl" id="ENST00000367953.7">
    <molecule id="Q7L513-2"/>
    <property type="protein sequence ID" value="ENSP00000356930.3"/>
    <property type="gene ID" value="ENSG00000132185.18"/>
</dbReference>
<dbReference type="Ensembl" id="ENST00000367957.7">
    <molecule id="Q7L513-5"/>
    <property type="protein sequence ID" value="ENSP00000356934.3"/>
    <property type="gene ID" value="ENSG00000132185.18"/>
</dbReference>
<dbReference type="Ensembl" id="ENST00000367959.6">
    <molecule id="Q7L513-10"/>
    <property type="protein sequence ID" value="ENSP00000356936.2"/>
    <property type="gene ID" value="ENSG00000132185.18"/>
</dbReference>
<dbReference type="Ensembl" id="ENST00000540521.5">
    <molecule id="Q7L513-11"/>
    <property type="protein sequence ID" value="ENSP00000442870.1"/>
    <property type="gene ID" value="ENSG00000132185.18"/>
</dbReference>
<dbReference type="Ensembl" id="ENST00000546024.5">
    <molecule id="Q7L513-12"/>
    <property type="protein sequence ID" value="ENSP00000439838.1"/>
    <property type="gene ID" value="ENSG00000132185.18"/>
</dbReference>
<dbReference type="Ensembl" id="ENST00000674251.1">
    <molecule id="Q7L513-14"/>
    <property type="protein sequence ID" value="ENSP00000501389.1"/>
    <property type="gene ID" value="ENSG00000132185.18"/>
</dbReference>
<dbReference type="Ensembl" id="ENST00000674323.1">
    <molecule id="Q7L513-9"/>
    <property type="protein sequence ID" value="ENSP00000501449.1"/>
    <property type="gene ID" value="ENSG00000132185.18"/>
</dbReference>
<dbReference type="GeneID" id="84824"/>
<dbReference type="KEGG" id="hsa:84824"/>
<dbReference type="MANE-Select" id="ENST00000236938.12">
    <property type="protein sequence ID" value="ENSP00000236938.7"/>
    <property type="RefSeq nucleotide sequence ID" value="NM_032738.4"/>
    <property type="RefSeq protein sequence ID" value="NP_116127.4"/>
</dbReference>
<dbReference type="UCSC" id="uc001gbd.4">
    <molecule id="Q7L513-1"/>
    <property type="organism name" value="human"/>
</dbReference>
<dbReference type="AGR" id="HGNC:18504"/>
<dbReference type="CTD" id="84824"/>
<dbReference type="DisGeNET" id="84824"/>
<dbReference type="GeneCards" id="FCRLA"/>
<dbReference type="HGNC" id="HGNC:18504">
    <property type="gene designation" value="FCRLA"/>
</dbReference>
<dbReference type="HPA" id="ENSG00000132185">
    <property type="expression patterns" value="Tissue enriched (lymphoid)"/>
</dbReference>
<dbReference type="MIM" id="606891">
    <property type="type" value="gene"/>
</dbReference>
<dbReference type="neXtProt" id="NX_Q7L513"/>
<dbReference type="OpenTargets" id="ENSG00000132185"/>
<dbReference type="PharmGKB" id="PA162388180"/>
<dbReference type="VEuPathDB" id="HostDB:ENSG00000132185"/>
<dbReference type="eggNOG" id="ENOG502T149">
    <property type="taxonomic scope" value="Eukaryota"/>
</dbReference>
<dbReference type="GeneTree" id="ENSGT01050000244808"/>
<dbReference type="HOGENOM" id="CLU_1824654_0_0_1"/>
<dbReference type="InParanoid" id="Q7L513"/>
<dbReference type="OMA" id="HHQMGIL"/>
<dbReference type="OrthoDB" id="8941709at2759"/>
<dbReference type="PAN-GO" id="Q7L513">
    <property type="GO annotations" value="3 GO annotations based on evolutionary models"/>
</dbReference>
<dbReference type="PhylomeDB" id="Q7L513"/>
<dbReference type="TreeFam" id="TF335097"/>
<dbReference type="PathwayCommons" id="Q7L513"/>
<dbReference type="SignaLink" id="Q7L513"/>
<dbReference type="BioGRID-ORCS" id="84824">
    <property type="hits" value="12 hits in 1136 CRISPR screens"/>
</dbReference>
<dbReference type="ChiTaRS" id="FCRLA">
    <property type="organism name" value="human"/>
</dbReference>
<dbReference type="EvolutionaryTrace" id="Q7L513"/>
<dbReference type="GeneWiki" id="FCRLA"/>
<dbReference type="GenomeRNAi" id="84824"/>
<dbReference type="Pharos" id="Q7L513">
    <property type="development level" value="Tbio"/>
</dbReference>
<dbReference type="PRO" id="PR:Q7L513"/>
<dbReference type="Proteomes" id="UP000005640">
    <property type="component" value="Chromosome 1"/>
</dbReference>
<dbReference type="RNAct" id="Q7L513">
    <property type="molecule type" value="protein"/>
</dbReference>
<dbReference type="Bgee" id="ENSG00000132185">
    <property type="expression patterns" value="Expressed in ileal mucosa and 114 other cell types or tissues"/>
</dbReference>
<dbReference type="ExpressionAtlas" id="Q7L513">
    <property type="expression patterns" value="baseline and differential"/>
</dbReference>
<dbReference type="GO" id="GO:0005737">
    <property type="term" value="C:cytoplasm"/>
    <property type="evidence" value="ECO:0000314"/>
    <property type="project" value="MGI"/>
</dbReference>
<dbReference type="GO" id="GO:0009897">
    <property type="term" value="C:external side of plasma membrane"/>
    <property type="evidence" value="ECO:0000318"/>
    <property type="project" value="GO_Central"/>
</dbReference>
<dbReference type="GO" id="GO:0004888">
    <property type="term" value="F:transmembrane signaling receptor activity"/>
    <property type="evidence" value="ECO:0000318"/>
    <property type="project" value="GO_Central"/>
</dbReference>
<dbReference type="GO" id="GO:0030154">
    <property type="term" value="P:cell differentiation"/>
    <property type="evidence" value="ECO:0007669"/>
    <property type="project" value="UniProtKB-KW"/>
</dbReference>
<dbReference type="GO" id="GO:0007166">
    <property type="term" value="P:cell surface receptor signaling pathway"/>
    <property type="evidence" value="ECO:0000318"/>
    <property type="project" value="GO_Central"/>
</dbReference>
<dbReference type="GO" id="GO:0006955">
    <property type="term" value="P:immune response"/>
    <property type="evidence" value="ECO:0000318"/>
    <property type="project" value="GO_Central"/>
</dbReference>
<dbReference type="FunFam" id="2.60.40.10:FF:000651">
    <property type="entry name" value="Fc receptor like 1"/>
    <property type="match status" value="1"/>
</dbReference>
<dbReference type="FunFam" id="2.60.40.10:FF:000217">
    <property type="entry name" value="High affinity immunoglobulin gamma Fc receptor I"/>
    <property type="match status" value="1"/>
</dbReference>
<dbReference type="Gene3D" id="2.60.40.10">
    <property type="entry name" value="Immunoglobulins"/>
    <property type="match status" value="2"/>
</dbReference>
<dbReference type="InterPro" id="IPR007110">
    <property type="entry name" value="Ig-like_dom"/>
</dbReference>
<dbReference type="InterPro" id="IPR036179">
    <property type="entry name" value="Ig-like_dom_sf"/>
</dbReference>
<dbReference type="InterPro" id="IPR013783">
    <property type="entry name" value="Ig-like_fold"/>
</dbReference>
<dbReference type="InterPro" id="IPR050488">
    <property type="entry name" value="Ig_Fc_receptor"/>
</dbReference>
<dbReference type="InterPro" id="IPR003599">
    <property type="entry name" value="Ig_sub"/>
</dbReference>
<dbReference type="PANTHER" id="PTHR11481:SF71">
    <property type="entry name" value="FC RECEPTOR-LIKE A"/>
    <property type="match status" value="1"/>
</dbReference>
<dbReference type="PANTHER" id="PTHR11481">
    <property type="entry name" value="IMMUNOGLOBULIN FC RECEPTOR"/>
    <property type="match status" value="1"/>
</dbReference>
<dbReference type="Pfam" id="PF13895">
    <property type="entry name" value="Ig_2"/>
    <property type="match status" value="2"/>
</dbReference>
<dbReference type="SMART" id="SM00409">
    <property type="entry name" value="IG"/>
    <property type="match status" value="2"/>
</dbReference>
<dbReference type="SUPFAM" id="SSF48726">
    <property type="entry name" value="Immunoglobulin"/>
    <property type="match status" value="2"/>
</dbReference>
<dbReference type="PROSITE" id="PS50835">
    <property type="entry name" value="IG_LIKE"/>
    <property type="match status" value="2"/>
</dbReference>
<accession>Q7L513</accession>
<accession>A0N0M1</accession>
<accession>A6NC03</accession>
<accession>A6NL20</accession>
<accession>F5H720</accession>
<accession>F8W743</accession>
<accession>G3V1J2</accession>
<accession>Q5VXA1</accession>
<accession>Q5VXA2</accession>
<accession>Q5VXA3</accession>
<accession>Q5VXA4</accession>
<accession>Q5VXB0</accession>
<accession>Q5VXB1</accession>
<accession>Q8NEW4</accession>
<accession>Q8WXH3</accession>
<accession>Q96PC6</accession>
<accession>Q96PJ0</accession>
<accession>Q96PJ1</accession>
<accession>Q96PJ2</accession>
<accession>Q96PJ4</accession>
<accession>Q9BR57</accession>
<proteinExistence type="evidence at protein level"/>
<feature type="signal peptide" evidence="7">
    <location>
        <begin position="1"/>
        <end position="27"/>
    </location>
</feature>
<feature type="chain" id="PRO_0000227935" description="Fc receptor-like A">
    <location>
        <begin position="28"/>
        <end position="359"/>
    </location>
</feature>
<feature type="domain" description="Ig-like C2-type 1">
    <location>
        <begin position="70"/>
        <end position="159"/>
    </location>
</feature>
<feature type="domain" description="Ig-like C2-type 2">
    <location>
        <begin position="170"/>
        <end position="257"/>
    </location>
</feature>
<feature type="region of interest" description="Disordered" evidence="2">
    <location>
        <begin position="259"/>
        <end position="313"/>
    </location>
</feature>
<feature type="compositionally biased region" description="Low complexity" evidence="2">
    <location>
        <begin position="279"/>
        <end position="288"/>
    </location>
</feature>
<feature type="compositionally biased region" description="Pro residues" evidence="2">
    <location>
        <begin position="289"/>
        <end position="299"/>
    </location>
</feature>
<feature type="disulfide bond" evidence="1">
    <location>
        <begin position="99"/>
        <end position="143"/>
    </location>
</feature>
<feature type="disulfide bond" evidence="1">
    <location>
        <begin position="192"/>
        <end position="240"/>
    </location>
</feature>
<feature type="splice variant" id="VSP_038297" description="In isoform 9, isoform 10, isoform 11, isoform 12, isoform 13, isoform 14 and isoform 15." evidence="12 13 14">
    <original>M</original>
    <variation>MLKKISVGVAGDLNTVTM</variation>
    <location>
        <position position="1"/>
    </location>
</feature>
<feature type="splice variant" id="VSP_017603" description="In isoform 7 and isoform 15." evidence="11 15">
    <location>
        <begin position="27"/>
        <end position="261"/>
    </location>
</feature>
<feature type="splice variant" id="VSP_017604" description="In isoform 5 and isoform 14." evidence="11 15">
    <location>
        <begin position="27"/>
        <end position="166"/>
    </location>
</feature>
<feature type="splice variant" id="VSP_017605" description="In isoform 2 and isoform 10." evidence="16">
    <original>A</original>
    <variation>AGCHAAA</variation>
    <location>
        <position position="28"/>
    </location>
</feature>
<feature type="splice variant" id="VSP_017606" description="In isoform 4 and isoform 11." evidence="11">
    <original>SFETLQCEGPVCTEESSCHTEDDLTDAREAGFQVKAYTFSEPFHLIVSYDWLILQGPAKPVFEGDLLVLRCQAWQDWPLTQVTFYRDGSALGPPGPNREFSITVVQKADSGHYHCSGIFQSPGPGIPETASVVAITVQ</original>
    <variation>GCHA</variation>
    <location>
        <begin position="29"/>
        <end position="166"/>
    </location>
</feature>
<feature type="splice variant" id="VSP_017607" description="In isoform 6 and isoform 13." evidence="11 15">
    <location>
        <begin position="78"/>
        <end position="261"/>
    </location>
</feature>
<feature type="splice variant" id="VSP_017608" description="In isoform 3 and isoform 12." evidence="11 15">
    <location>
        <begin position="78"/>
        <end position="166"/>
    </location>
</feature>
<feature type="splice variant" id="VSP_017609" description="In isoform 8." evidence="15">
    <location>
        <begin position="167"/>
        <end position="261"/>
    </location>
</feature>
<feature type="sequence variant" id="VAR_025646" description="In dbSNP:rs11746." evidence="3 4 5 6 8 10">
    <original>R</original>
    <variation>Q</variation>
    <location>
        <position position="349"/>
    </location>
</feature>
<feature type="sequence conflict" description="In Ref. 1; AAL23904." evidence="17" ref="1">
    <original>S</original>
    <variation>N</variation>
    <location>
        <position position="265"/>
    </location>
</feature>
<feature type="sequence conflict" description="In Ref. 1; AAL23903." evidence="17" ref="1">
    <original>S</original>
    <variation>P</variation>
    <location>
        <position position="308"/>
    </location>
</feature>
<feature type="sequence conflict" description="In Ref. 1; AAL27307." evidence="17" ref="1">
    <original>L</original>
    <variation>P</variation>
    <location>
        <position position="317"/>
    </location>
</feature>
<feature type="sequence conflict" description="In Ref. 1; AAL23905." evidence="17" ref="1">
    <original>R</original>
    <variation>G</variation>
    <location>
        <position position="343"/>
    </location>
</feature>
<feature type="strand" evidence="18">
    <location>
        <begin position="173"/>
        <end position="178"/>
    </location>
</feature>
<feature type="strand" evidence="18">
    <location>
        <begin position="188"/>
        <end position="193"/>
    </location>
</feature>
<feature type="strand" evidence="18">
    <location>
        <begin position="206"/>
        <end position="211"/>
    </location>
</feature>
<feature type="strand" evidence="18">
    <location>
        <begin position="214"/>
        <end position="221"/>
    </location>
</feature>
<feature type="strand" evidence="18">
    <location>
        <begin position="224"/>
        <end position="229"/>
    </location>
</feature>
<feature type="helix" evidence="18">
    <location>
        <begin position="232"/>
        <end position="234"/>
    </location>
</feature>
<feature type="strand" evidence="18">
    <location>
        <begin position="236"/>
        <end position="243"/>
    </location>
</feature>
<feature type="strand" evidence="18">
    <location>
        <begin position="247"/>
        <end position="252"/>
    </location>
</feature>
<feature type="strand" evidence="18">
    <location>
        <begin position="256"/>
        <end position="258"/>
    </location>
</feature>
<protein>
    <recommendedName>
        <fullName>Fc receptor-like A</fullName>
    </recommendedName>
    <alternativeName>
        <fullName>Fc receptor homolog expressed in B-cells</fullName>
    </alternativeName>
    <alternativeName>
        <fullName>Fc receptor-like and mucin-like protein 1</fullName>
    </alternativeName>
    <alternativeName>
        <fullName>Fc receptor-like protein</fullName>
    </alternativeName>
    <alternativeName>
        <fullName>Fc receptor-related protein X</fullName>
        <shortName>FcRX</shortName>
    </alternativeName>
</protein>
<name>FCRLA_HUMAN</name>
<sequence>MKLGCVLMAWALYLSLGVLWVAQMLLAASFETLQCEGPVCTEESSCHTEDDLTDAREAGFQVKAYTFSEPFHLIVSYDWLILQGPAKPVFEGDLLVLRCQAWQDWPLTQVTFYRDGSALGPPGPNREFSITVVQKADSGHYHCSGIFQSPGPGIPETASVVAITVQELFPAPILRAVPSAEPQAGSPMTLSCQTKLPLQRSAARLLFSFYKDGRIVQSRGLSSEFQIPTASEDHSGSYWCEAATEDNQVWKQSPQLEIRVQGASSSAAPPTLNPAPQKSAAPGTAPEEAPGPLPPPPTPSSEDPGFSSPLGMPDPHLYHQMGLLLKHMQDVRVLLGHLLMELRELSGHRKPGTTKATAE</sequence>
<organism>
    <name type="scientific">Homo sapiens</name>
    <name type="common">Human</name>
    <dbReference type="NCBI Taxonomy" id="9606"/>
    <lineage>
        <taxon>Eukaryota</taxon>
        <taxon>Metazoa</taxon>
        <taxon>Chordata</taxon>
        <taxon>Craniata</taxon>
        <taxon>Vertebrata</taxon>
        <taxon>Euteleostomi</taxon>
        <taxon>Mammalia</taxon>
        <taxon>Eutheria</taxon>
        <taxon>Euarchontoglires</taxon>
        <taxon>Primates</taxon>
        <taxon>Haplorrhini</taxon>
        <taxon>Catarrhini</taxon>
        <taxon>Hominidae</taxon>
        <taxon>Homo</taxon>
    </lineage>
</organism>
<keyword id="KW-0002">3D-structure</keyword>
<keyword id="KW-0025">Alternative splicing</keyword>
<keyword id="KW-0963">Cytoplasm</keyword>
<keyword id="KW-0221">Differentiation</keyword>
<keyword id="KW-0903">Direct protein sequencing</keyword>
<keyword id="KW-1015">Disulfide bond</keyword>
<keyword id="KW-0393">Immunoglobulin domain</keyword>
<keyword id="KW-1267">Proteomics identification</keyword>
<keyword id="KW-1185">Reference proteome</keyword>
<keyword id="KW-0677">Repeat</keyword>
<keyword id="KW-0732">Signal</keyword>
<evidence type="ECO:0000255" key="1">
    <source>
        <dbReference type="PROSITE-ProRule" id="PRU00114"/>
    </source>
</evidence>
<evidence type="ECO:0000256" key="2">
    <source>
        <dbReference type="SAM" id="MobiDB-lite"/>
    </source>
</evidence>
<evidence type="ECO:0000269" key="3">
    <source>
    </source>
</evidence>
<evidence type="ECO:0000269" key="4">
    <source>
    </source>
</evidence>
<evidence type="ECO:0000269" key="5">
    <source>
    </source>
</evidence>
<evidence type="ECO:0000269" key="6">
    <source>
    </source>
</evidence>
<evidence type="ECO:0000269" key="7">
    <source>
    </source>
</evidence>
<evidence type="ECO:0000269" key="8">
    <source>
    </source>
</evidence>
<evidence type="ECO:0000269" key="9">
    <source>
    </source>
</evidence>
<evidence type="ECO:0000269" key="10">
    <source ref="5"/>
</evidence>
<evidence type="ECO:0000303" key="11">
    <source>
    </source>
</evidence>
<evidence type="ECO:0000303" key="12">
    <source>
    </source>
</evidence>
<evidence type="ECO:0000303" key="13">
    <source>
    </source>
</evidence>
<evidence type="ECO:0000303" key="14">
    <source>
    </source>
</evidence>
<evidence type="ECO:0000303" key="15">
    <source>
    </source>
</evidence>
<evidence type="ECO:0000303" key="16">
    <source ref="5"/>
</evidence>
<evidence type="ECO:0000305" key="17"/>
<evidence type="ECO:0007829" key="18">
    <source>
        <dbReference type="PDB" id="4HWN"/>
    </source>
</evidence>